<name>AROE_LEPBL</name>
<sequence>MNSKTNQTAKTFGIVGFPLSHSLSPLIHNSIYKDRGIDASYLVFETPELNSKTIQEFRNSGILGLSVTIPHKEKAFLLADKADSTSTIMKASNTLLIGPDSIHAYNTDGEGAYRSILELSPESLNVGNTVILGSGGSARGIAYNLAASGKIQNLFLCSRNEMTAKEICFLISKNSNVKMEHITQDSLFSRKEEISLVIHTTPLGMKGQAPGPFLSEKFFNPNMTLFDIVYNPLETPLVKAAKKAGAKIIPGSEMLLHQAMKQFELFTGISPNASDILKTRERLSQTLTNQ</sequence>
<accession>Q054A8</accession>
<feature type="chain" id="PRO_1000021295" description="Shikimate dehydrogenase (NADP(+))">
    <location>
        <begin position="1"/>
        <end position="290"/>
    </location>
</feature>
<feature type="active site" description="Proton acceptor" evidence="1">
    <location>
        <position position="72"/>
    </location>
</feature>
<feature type="binding site" evidence="1">
    <location>
        <begin position="22"/>
        <end position="24"/>
    </location>
    <ligand>
        <name>shikimate</name>
        <dbReference type="ChEBI" id="CHEBI:36208"/>
    </ligand>
</feature>
<feature type="binding site" evidence="1">
    <location>
        <position position="68"/>
    </location>
    <ligand>
        <name>shikimate</name>
        <dbReference type="ChEBI" id="CHEBI:36208"/>
    </ligand>
</feature>
<feature type="binding site" evidence="1">
    <location>
        <position position="93"/>
    </location>
    <ligand>
        <name>shikimate</name>
        <dbReference type="ChEBI" id="CHEBI:36208"/>
    </ligand>
</feature>
<feature type="binding site" evidence="1">
    <location>
        <position position="108"/>
    </location>
    <ligand>
        <name>shikimate</name>
        <dbReference type="ChEBI" id="CHEBI:36208"/>
    </ligand>
</feature>
<feature type="binding site" evidence="1">
    <location>
        <begin position="133"/>
        <end position="137"/>
    </location>
    <ligand>
        <name>NADP(+)</name>
        <dbReference type="ChEBI" id="CHEBI:58349"/>
    </ligand>
</feature>
<feature type="binding site" evidence="1">
    <location>
        <position position="228"/>
    </location>
    <ligand>
        <name>NADP(+)</name>
        <dbReference type="ChEBI" id="CHEBI:58349"/>
    </ligand>
</feature>
<feature type="binding site" evidence="1">
    <location>
        <position position="230"/>
    </location>
    <ligand>
        <name>shikimate</name>
        <dbReference type="ChEBI" id="CHEBI:36208"/>
    </ligand>
</feature>
<feature type="binding site" evidence="1">
    <location>
        <position position="251"/>
    </location>
    <ligand>
        <name>NADP(+)</name>
        <dbReference type="ChEBI" id="CHEBI:58349"/>
    </ligand>
</feature>
<proteinExistence type="inferred from homology"/>
<gene>
    <name evidence="1" type="primary">aroE</name>
    <name type="ordered locus">LBL_0779</name>
</gene>
<comment type="function">
    <text evidence="1">Involved in the biosynthesis of the chorismate, which leads to the biosynthesis of aromatic amino acids. Catalyzes the reversible NADPH linked reduction of 3-dehydroshikimate (DHSA) to yield shikimate (SA).</text>
</comment>
<comment type="catalytic activity">
    <reaction evidence="1">
        <text>shikimate + NADP(+) = 3-dehydroshikimate + NADPH + H(+)</text>
        <dbReference type="Rhea" id="RHEA:17737"/>
        <dbReference type="ChEBI" id="CHEBI:15378"/>
        <dbReference type="ChEBI" id="CHEBI:16630"/>
        <dbReference type="ChEBI" id="CHEBI:36208"/>
        <dbReference type="ChEBI" id="CHEBI:57783"/>
        <dbReference type="ChEBI" id="CHEBI:58349"/>
        <dbReference type="EC" id="1.1.1.25"/>
    </reaction>
</comment>
<comment type="pathway">
    <text evidence="1">Metabolic intermediate biosynthesis; chorismate biosynthesis; chorismate from D-erythrose 4-phosphate and phosphoenolpyruvate: step 4/7.</text>
</comment>
<comment type="subunit">
    <text evidence="1">Homodimer.</text>
</comment>
<comment type="similarity">
    <text evidence="1">Belongs to the shikimate dehydrogenase family.</text>
</comment>
<protein>
    <recommendedName>
        <fullName evidence="1">Shikimate dehydrogenase (NADP(+))</fullName>
        <shortName evidence="1">SDH</shortName>
        <ecNumber evidence="1">1.1.1.25</ecNumber>
    </recommendedName>
</protein>
<organism>
    <name type="scientific">Leptospira borgpetersenii serovar Hardjo-bovis (strain L550)</name>
    <dbReference type="NCBI Taxonomy" id="355276"/>
    <lineage>
        <taxon>Bacteria</taxon>
        <taxon>Pseudomonadati</taxon>
        <taxon>Spirochaetota</taxon>
        <taxon>Spirochaetia</taxon>
        <taxon>Leptospirales</taxon>
        <taxon>Leptospiraceae</taxon>
        <taxon>Leptospira</taxon>
    </lineage>
</organism>
<reference key="1">
    <citation type="journal article" date="2006" name="Proc. Natl. Acad. Sci. U.S.A.">
        <title>Genome reduction in Leptospira borgpetersenii reflects limited transmission potential.</title>
        <authorList>
            <person name="Bulach D.M."/>
            <person name="Zuerner R.L."/>
            <person name="Wilson P."/>
            <person name="Seemann T."/>
            <person name="McGrath A."/>
            <person name="Cullen P.A."/>
            <person name="Davis J."/>
            <person name="Johnson M."/>
            <person name="Kuczek E."/>
            <person name="Alt D.P."/>
            <person name="Peterson-Burch B."/>
            <person name="Coppel R.L."/>
            <person name="Rood J.I."/>
            <person name="Davies J.K."/>
            <person name="Adler B."/>
        </authorList>
    </citation>
    <scope>NUCLEOTIDE SEQUENCE [LARGE SCALE GENOMIC DNA]</scope>
    <source>
        <strain>L550</strain>
    </source>
</reference>
<keyword id="KW-0028">Amino-acid biosynthesis</keyword>
<keyword id="KW-0057">Aromatic amino acid biosynthesis</keyword>
<keyword id="KW-0521">NADP</keyword>
<keyword id="KW-0560">Oxidoreductase</keyword>
<dbReference type="EC" id="1.1.1.25" evidence="1"/>
<dbReference type="EMBL" id="CP000348">
    <property type="protein sequence ID" value="ABJ78337.1"/>
    <property type="molecule type" value="Genomic_DNA"/>
</dbReference>
<dbReference type="RefSeq" id="WP_011669648.1">
    <property type="nucleotide sequence ID" value="NC_008508.1"/>
</dbReference>
<dbReference type="SMR" id="Q054A8"/>
<dbReference type="KEGG" id="lbl:LBL_0779"/>
<dbReference type="HOGENOM" id="CLU_044063_0_0_12"/>
<dbReference type="UniPathway" id="UPA00053">
    <property type="reaction ID" value="UER00087"/>
</dbReference>
<dbReference type="GO" id="GO:0005829">
    <property type="term" value="C:cytosol"/>
    <property type="evidence" value="ECO:0007669"/>
    <property type="project" value="TreeGrafter"/>
</dbReference>
<dbReference type="GO" id="GO:0050661">
    <property type="term" value="F:NADP binding"/>
    <property type="evidence" value="ECO:0007669"/>
    <property type="project" value="InterPro"/>
</dbReference>
<dbReference type="GO" id="GO:0004764">
    <property type="term" value="F:shikimate 3-dehydrogenase (NADP+) activity"/>
    <property type="evidence" value="ECO:0007669"/>
    <property type="project" value="UniProtKB-UniRule"/>
</dbReference>
<dbReference type="GO" id="GO:0008652">
    <property type="term" value="P:amino acid biosynthetic process"/>
    <property type="evidence" value="ECO:0007669"/>
    <property type="project" value="UniProtKB-KW"/>
</dbReference>
<dbReference type="GO" id="GO:0009073">
    <property type="term" value="P:aromatic amino acid family biosynthetic process"/>
    <property type="evidence" value="ECO:0007669"/>
    <property type="project" value="UniProtKB-KW"/>
</dbReference>
<dbReference type="GO" id="GO:0009423">
    <property type="term" value="P:chorismate biosynthetic process"/>
    <property type="evidence" value="ECO:0007669"/>
    <property type="project" value="UniProtKB-UniRule"/>
</dbReference>
<dbReference type="GO" id="GO:0019632">
    <property type="term" value="P:shikimate metabolic process"/>
    <property type="evidence" value="ECO:0007669"/>
    <property type="project" value="InterPro"/>
</dbReference>
<dbReference type="CDD" id="cd01065">
    <property type="entry name" value="NAD_bind_Shikimate_DH"/>
    <property type="match status" value="1"/>
</dbReference>
<dbReference type="Gene3D" id="3.40.50.10860">
    <property type="entry name" value="Leucine Dehydrogenase, chain A, domain 1"/>
    <property type="match status" value="1"/>
</dbReference>
<dbReference type="Gene3D" id="3.40.50.720">
    <property type="entry name" value="NAD(P)-binding Rossmann-like Domain"/>
    <property type="match status" value="1"/>
</dbReference>
<dbReference type="HAMAP" id="MF_00222">
    <property type="entry name" value="Shikimate_DH_AroE"/>
    <property type="match status" value="1"/>
</dbReference>
<dbReference type="InterPro" id="IPR046346">
    <property type="entry name" value="Aminoacid_DH-like_N_sf"/>
</dbReference>
<dbReference type="InterPro" id="IPR036291">
    <property type="entry name" value="NAD(P)-bd_dom_sf"/>
</dbReference>
<dbReference type="InterPro" id="IPR041121">
    <property type="entry name" value="SDH_C"/>
</dbReference>
<dbReference type="InterPro" id="IPR011342">
    <property type="entry name" value="Shikimate_DH"/>
</dbReference>
<dbReference type="InterPro" id="IPR013708">
    <property type="entry name" value="Shikimate_DH-bd_N"/>
</dbReference>
<dbReference type="InterPro" id="IPR022893">
    <property type="entry name" value="Shikimate_DH_fam"/>
</dbReference>
<dbReference type="NCBIfam" id="TIGR00507">
    <property type="entry name" value="aroE"/>
    <property type="match status" value="1"/>
</dbReference>
<dbReference type="PANTHER" id="PTHR21089:SF1">
    <property type="entry name" value="BIFUNCTIONAL 3-DEHYDROQUINATE DEHYDRATASE_SHIKIMATE DEHYDROGENASE, CHLOROPLASTIC"/>
    <property type="match status" value="1"/>
</dbReference>
<dbReference type="PANTHER" id="PTHR21089">
    <property type="entry name" value="SHIKIMATE DEHYDROGENASE"/>
    <property type="match status" value="1"/>
</dbReference>
<dbReference type="Pfam" id="PF18317">
    <property type="entry name" value="SDH_C"/>
    <property type="match status" value="1"/>
</dbReference>
<dbReference type="Pfam" id="PF08501">
    <property type="entry name" value="Shikimate_dh_N"/>
    <property type="match status" value="1"/>
</dbReference>
<dbReference type="SUPFAM" id="SSF53223">
    <property type="entry name" value="Aminoacid dehydrogenase-like, N-terminal domain"/>
    <property type="match status" value="1"/>
</dbReference>
<dbReference type="SUPFAM" id="SSF51735">
    <property type="entry name" value="NAD(P)-binding Rossmann-fold domains"/>
    <property type="match status" value="1"/>
</dbReference>
<evidence type="ECO:0000255" key="1">
    <source>
        <dbReference type="HAMAP-Rule" id="MF_00222"/>
    </source>
</evidence>